<name>G3P_CRYNJ</name>
<feature type="chain" id="PRO_0000145549" description="Glyceraldehyde-3-phosphate dehydrogenase">
    <location>
        <begin position="1"/>
        <end position="339"/>
    </location>
</feature>
<feature type="active site" description="Nucleophile" evidence="2">
    <location>
        <position position="151"/>
    </location>
</feature>
<feature type="binding site" evidence="1">
    <location>
        <begin position="12"/>
        <end position="13"/>
    </location>
    <ligand>
        <name>NAD(+)</name>
        <dbReference type="ChEBI" id="CHEBI:57540"/>
    </ligand>
</feature>
<feature type="binding site" evidence="1">
    <location>
        <position position="34"/>
    </location>
    <ligand>
        <name>NAD(+)</name>
        <dbReference type="ChEBI" id="CHEBI:57540"/>
    </ligand>
</feature>
<feature type="binding site" evidence="1">
    <location>
        <position position="79"/>
    </location>
    <ligand>
        <name>NAD(+)</name>
        <dbReference type="ChEBI" id="CHEBI:57540"/>
    </ligand>
</feature>
<feature type="binding site" evidence="1">
    <location>
        <begin position="150"/>
        <end position="152"/>
    </location>
    <ligand>
        <name>D-glyceraldehyde 3-phosphate</name>
        <dbReference type="ChEBI" id="CHEBI:59776"/>
    </ligand>
</feature>
<feature type="binding site" evidence="1">
    <location>
        <position position="181"/>
    </location>
    <ligand>
        <name>D-glyceraldehyde 3-phosphate</name>
        <dbReference type="ChEBI" id="CHEBI:59776"/>
    </ligand>
</feature>
<feature type="binding site" evidence="1">
    <location>
        <begin position="210"/>
        <end position="211"/>
    </location>
    <ligand>
        <name>D-glyceraldehyde 3-phosphate</name>
        <dbReference type="ChEBI" id="CHEBI:59776"/>
    </ligand>
</feature>
<feature type="binding site" evidence="1">
    <location>
        <position position="233"/>
    </location>
    <ligand>
        <name>D-glyceraldehyde 3-phosphate</name>
        <dbReference type="ChEBI" id="CHEBI:59776"/>
    </ligand>
</feature>
<feature type="binding site" evidence="1">
    <location>
        <position position="316"/>
    </location>
    <ligand>
        <name>NAD(+)</name>
        <dbReference type="ChEBI" id="CHEBI:57540"/>
    </ligand>
</feature>
<feature type="site" description="Activates thiol group during catalysis" evidence="1">
    <location>
        <position position="178"/>
    </location>
</feature>
<dbReference type="EC" id="1.2.1.12"/>
<dbReference type="EMBL" id="AE017346">
    <property type="protein sequence ID" value="AAW44320.1"/>
    <property type="molecule type" value="Genomic_DNA"/>
</dbReference>
<dbReference type="RefSeq" id="XP_571627.1">
    <property type="nucleotide sequence ID" value="XM_571627.1"/>
</dbReference>
<dbReference type="SMR" id="P0CN74"/>
<dbReference type="FunCoup" id="P0CN74">
    <property type="interactions" value="296"/>
</dbReference>
<dbReference type="STRING" id="214684.P0CN74"/>
<dbReference type="PaxDb" id="214684-P0CN74"/>
<dbReference type="EnsemblFungi" id="AAW44320">
    <property type="protein sequence ID" value="AAW44320"/>
    <property type="gene ID" value="CNF03160"/>
</dbReference>
<dbReference type="GeneID" id="3258302"/>
<dbReference type="KEGG" id="cne:CNF03160"/>
<dbReference type="VEuPathDB" id="FungiDB:CNF03160"/>
<dbReference type="eggNOG" id="KOG0657">
    <property type="taxonomic scope" value="Eukaryota"/>
</dbReference>
<dbReference type="HOGENOM" id="CLU_030140_0_3_1"/>
<dbReference type="InParanoid" id="P0CN74"/>
<dbReference type="OMA" id="YGYTCNM"/>
<dbReference type="OrthoDB" id="1152826at2759"/>
<dbReference type="UniPathway" id="UPA00109">
    <property type="reaction ID" value="UER00184"/>
</dbReference>
<dbReference type="Proteomes" id="UP000002149">
    <property type="component" value="Chromosome 6"/>
</dbReference>
<dbReference type="GO" id="GO:0005829">
    <property type="term" value="C:cytosol"/>
    <property type="evidence" value="ECO:0000318"/>
    <property type="project" value="GO_Central"/>
</dbReference>
<dbReference type="GO" id="GO:0004365">
    <property type="term" value="F:glyceraldehyde-3-phosphate dehydrogenase (NAD+) (phosphorylating) activity"/>
    <property type="evidence" value="ECO:0000318"/>
    <property type="project" value="GO_Central"/>
</dbReference>
<dbReference type="GO" id="GO:0051287">
    <property type="term" value="F:NAD binding"/>
    <property type="evidence" value="ECO:0007669"/>
    <property type="project" value="InterPro"/>
</dbReference>
<dbReference type="GO" id="GO:0050661">
    <property type="term" value="F:NADP binding"/>
    <property type="evidence" value="ECO:0007669"/>
    <property type="project" value="InterPro"/>
</dbReference>
<dbReference type="GO" id="GO:0006006">
    <property type="term" value="P:glucose metabolic process"/>
    <property type="evidence" value="ECO:0007669"/>
    <property type="project" value="InterPro"/>
</dbReference>
<dbReference type="GO" id="GO:0006096">
    <property type="term" value="P:glycolytic process"/>
    <property type="evidence" value="ECO:0000318"/>
    <property type="project" value="GO_Central"/>
</dbReference>
<dbReference type="CDD" id="cd18126">
    <property type="entry name" value="GAPDH_I_C"/>
    <property type="match status" value="1"/>
</dbReference>
<dbReference type="CDD" id="cd05214">
    <property type="entry name" value="GAPDH_I_N"/>
    <property type="match status" value="1"/>
</dbReference>
<dbReference type="FunFam" id="3.30.360.10:FF:000001">
    <property type="entry name" value="Glyceraldehyde-3-phosphate dehydrogenase"/>
    <property type="match status" value="1"/>
</dbReference>
<dbReference type="FunFam" id="3.40.50.720:FF:000020">
    <property type="entry name" value="Glyceraldehyde-3-phosphate dehydrogenase"/>
    <property type="match status" value="1"/>
</dbReference>
<dbReference type="Gene3D" id="3.30.360.10">
    <property type="entry name" value="Dihydrodipicolinate Reductase, domain 2"/>
    <property type="match status" value="1"/>
</dbReference>
<dbReference type="Gene3D" id="3.40.50.720">
    <property type="entry name" value="NAD(P)-binding Rossmann-like Domain"/>
    <property type="match status" value="1"/>
</dbReference>
<dbReference type="InterPro" id="IPR020831">
    <property type="entry name" value="GlycerAld/Erythrose_P_DH"/>
</dbReference>
<dbReference type="InterPro" id="IPR020830">
    <property type="entry name" value="GlycerAld_3-P_DH_AS"/>
</dbReference>
<dbReference type="InterPro" id="IPR020829">
    <property type="entry name" value="GlycerAld_3-P_DH_cat"/>
</dbReference>
<dbReference type="InterPro" id="IPR020828">
    <property type="entry name" value="GlycerAld_3-P_DH_NAD(P)-bd"/>
</dbReference>
<dbReference type="InterPro" id="IPR006424">
    <property type="entry name" value="Glyceraldehyde-3-P_DH_1"/>
</dbReference>
<dbReference type="InterPro" id="IPR036291">
    <property type="entry name" value="NAD(P)-bd_dom_sf"/>
</dbReference>
<dbReference type="NCBIfam" id="TIGR01534">
    <property type="entry name" value="GAPDH-I"/>
    <property type="match status" value="1"/>
</dbReference>
<dbReference type="PANTHER" id="PTHR10836">
    <property type="entry name" value="GLYCERALDEHYDE 3-PHOSPHATE DEHYDROGENASE"/>
    <property type="match status" value="1"/>
</dbReference>
<dbReference type="PANTHER" id="PTHR10836:SF76">
    <property type="entry name" value="GLYCERALDEHYDE-3-PHOSPHATE DEHYDROGENASE-RELATED"/>
    <property type="match status" value="1"/>
</dbReference>
<dbReference type="Pfam" id="PF02800">
    <property type="entry name" value="Gp_dh_C"/>
    <property type="match status" value="1"/>
</dbReference>
<dbReference type="Pfam" id="PF00044">
    <property type="entry name" value="Gp_dh_N"/>
    <property type="match status" value="1"/>
</dbReference>
<dbReference type="PIRSF" id="PIRSF000149">
    <property type="entry name" value="GAP_DH"/>
    <property type="match status" value="1"/>
</dbReference>
<dbReference type="PRINTS" id="PR00078">
    <property type="entry name" value="G3PDHDRGNASE"/>
</dbReference>
<dbReference type="SMART" id="SM00846">
    <property type="entry name" value="Gp_dh_N"/>
    <property type="match status" value="1"/>
</dbReference>
<dbReference type="SUPFAM" id="SSF55347">
    <property type="entry name" value="Glyceraldehyde-3-phosphate dehydrogenase-like, C-terminal domain"/>
    <property type="match status" value="1"/>
</dbReference>
<dbReference type="SUPFAM" id="SSF51735">
    <property type="entry name" value="NAD(P)-binding Rossmann-fold domains"/>
    <property type="match status" value="1"/>
</dbReference>
<dbReference type="PROSITE" id="PS00071">
    <property type="entry name" value="GAPDH"/>
    <property type="match status" value="1"/>
</dbReference>
<evidence type="ECO:0000250" key="1"/>
<evidence type="ECO:0000255" key="2">
    <source>
        <dbReference type="PROSITE-ProRule" id="PRU10009"/>
    </source>
</evidence>
<evidence type="ECO:0000305" key="3"/>
<gene>
    <name type="primary">GPD</name>
    <name type="ordered locus">CNF03160</name>
</gene>
<protein>
    <recommendedName>
        <fullName>Glyceraldehyde-3-phosphate dehydrogenase</fullName>
        <shortName>GAPDH</shortName>
        <ecNumber>1.2.1.12</ecNumber>
    </recommendedName>
</protein>
<keyword id="KW-0963">Cytoplasm</keyword>
<keyword id="KW-0324">Glycolysis</keyword>
<keyword id="KW-0520">NAD</keyword>
<keyword id="KW-0560">Oxidoreductase</keyword>
<keyword id="KW-1185">Reference proteome</keyword>
<reference key="1">
    <citation type="journal article" date="2005" name="Science">
        <title>The genome of the basidiomycetous yeast and human pathogen Cryptococcus neoformans.</title>
        <authorList>
            <person name="Loftus B.J."/>
            <person name="Fung E."/>
            <person name="Roncaglia P."/>
            <person name="Rowley D."/>
            <person name="Amedeo P."/>
            <person name="Bruno D."/>
            <person name="Vamathevan J."/>
            <person name="Miranda M."/>
            <person name="Anderson I.J."/>
            <person name="Fraser J.A."/>
            <person name="Allen J.E."/>
            <person name="Bosdet I.E."/>
            <person name="Brent M.R."/>
            <person name="Chiu R."/>
            <person name="Doering T.L."/>
            <person name="Donlin M.J."/>
            <person name="D'Souza C.A."/>
            <person name="Fox D.S."/>
            <person name="Grinberg V."/>
            <person name="Fu J."/>
            <person name="Fukushima M."/>
            <person name="Haas B.J."/>
            <person name="Huang J.C."/>
            <person name="Janbon G."/>
            <person name="Jones S.J.M."/>
            <person name="Koo H.L."/>
            <person name="Krzywinski M.I."/>
            <person name="Kwon-Chung K.J."/>
            <person name="Lengeler K.B."/>
            <person name="Maiti R."/>
            <person name="Marra M.A."/>
            <person name="Marra R.E."/>
            <person name="Mathewson C.A."/>
            <person name="Mitchell T.G."/>
            <person name="Pertea M."/>
            <person name="Riggs F.R."/>
            <person name="Salzberg S.L."/>
            <person name="Schein J.E."/>
            <person name="Shvartsbeyn A."/>
            <person name="Shin H."/>
            <person name="Shumway M."/>
            <person name="Specht C.A."/>
            <person name="Suh B.B."/>
            <person name="Tenney A."/>
            <person name="Utterback T.R."/>
            <person name="Wickes B.L."/>
            <person name="Wortman J.R."/>
            <person name="Wye N.H."/>
            <person name="Kronstad J.W."/>
            <person name="Lodge J.K."/>
            <person name="Heitman J."/>
            <person name="Davis R.W."/>
            <person name="Fraser C.M."/>
            <person name="Hyman R.W."/>
        </authorList>
    </citation>
    <scope>NUCLEOTIDE SEQUENCE [LARGE SCALE GENOMIC DNA]</scope>
    <source>
        <strain>JEC21 / ATCC MYA-565</strain>
    </source>
</reference>
<comment type="catalytic activity">
    <reaction evidence="2">
        <text>D-glyceraldehyde 3-phosphate + phosphate + NAD(+) = (2R)-3-phospho-glyceroyl phosphate + NADH + H(+)</text>
        <dbReference type="Rhea" id="RHEA:10300"/>
        <dbReference type="ChEBI" id="CHEBI:15378"/>
        <dbReference type="ChEBI" id="CHEBI:43474"/>
        <dbReference type="ChEBI" id="CHEBI:57540"/>
        <dbReference type="ChEBI" id="CHEBI:57604"/>
        <dbReference type="ChEBI" id="CHEBI:57945"/>
        <dbReference type="ChEBI" id="CHEBI:59776"/>
        <dbReference type="EC" id="1.2.1.12"/>
    </reaction>
</comment>
<comment type="pathway">
    <text>Carbohydrate degradation; glycolysis; pyruvate from D-glyceraldehyde 3-phosphate: step 1/5.</text>
</comment>
<comment type="subunit">
    <text evidence="1">Homotetramer.</text>
</comment>
<comment type="subcellular location">
    <subcellularLocation>
        <location evidence="1">Cytoplasm</location>
    </subcellularLocation>
</comment>
<comment type="similarity">
    <text evidence="3">Belongs to the glyceraldehyde-3-phosphate dehydrogenase family.</text>
</comment>
<organism>
    <name type="scientific">Cryptococcus neoformans var. neoformans serotype D (strain JEC21 / ATCC MYA-565)</name>
    <name type="common">Filobasidiella neoformans</name>
    <dbReference type="NCBI Taxonomy" id="214684"/>
    <lineage>
        <taxon>Eukaryota</taxon>
        <taxon>Fungi</taxon>
        <taxon>Dikarya</taxon>
        <taxon>Basidiomycota</taxon>
        <taxon>Agaricomycotina</taxon>
        <taxon>Tremellomycetes</taxon>
        <taxon>Tremellales</taxon>
        <taxon>Cryptococcaceae</taxon>
        <taxon>Cryptococcus</taxon>
        <taxon>Cryptococcus neoformans species complex</taxon>
    </lineage>
</organism>
<proteinExistence type="inferred from homology"/>
<accession>P0CN74</accession>
<accession>Q55R25</accession>
<accession>Q5KF42</accession>
<accession>Q9Y8E9</accession>
<sequence>MVVKVGINGFGRIGRIVLRNAIEHGDLEVVAVNDPFIDLDYMVYMFKYDSTHGRFKGSVEVKDGKLYINNKAIAVFGEKDPANIKWGEAGAEYVVESTGVFTTTEKAGVHLKGGAKKVVISAPSADAPMFVCGVNLDAYKPEYQIVSNASCTTNCLAPLAKVIHDNFTIIEGLMTTVHATTATQKTVDGPSHKDWRGGRGAAANIIPSSTGAAKAVGKVIPSLNGKLTGMSFRVPTSDVSVVDLVCRIEKGASYEEIKNVIKKASESPELKGILGYTEDAVVSTDFIGSTESSIFDAQAGIALNANFVKLVSWYDNEYGYSRRVCDLISYIAGVDAKAQ</sequence>